<proteinExistence type="inferred from homology"/>
<reference key="1">
    <citation type="journal article" date="2002" name="Nature">
        <title>The genome sequence of Schizosaccharomyces pombe.</title>
        <authorList>
            <person name="Wood V."/>
            <person name="Gwilliam R."/>
            <person name="Rajandream M.A."/>
            <person name="Lyne M.H."/>
            <person name="Lyne R."/>
            <person name="Stewart A."/>
            <person name="Sgouros J.G."/>
            <person name="Peat N."/>
            <person name="Hayles J."/>
            <person name="Baker S.G."/>
            <person name="Basham D."/>
            <person name="Bowman S."/>
            <person name="Brooks K."/>
            <person name="Brown D."/>
            <person name="Brown S."/>
            <person name="Chillingworth T."/>
            <person name="Churcher C.M."/>
            <person name="Collins M."/>
            <person name="Connor R."/>
            <person name="Cronin A."/>
            <person name="Davis P."/>
            <person name="Feltwell T."/>
            <person name="Fraser A."/>
            <person name="Gentles S."/>
            <person name="Goble A."/>
            <person name="Hamlin N."/>
            <person name="Harris D.E."/>
            <person name="Hidalgo J."/>
            <person name="Hodgson G."/>
            <person name="Holroyd S."/>
            <person name="Hornsby T."/>
            <person name="Howarth S."/>
            <person name="Huckle E.J."/>
            <person name="Hunt S."/>
            <person name="Jagels K."/>
            <person name="James K.D."/>
            <person name="Jones L."/>
            <person name="Jones M."/>
            <person name="Leather S."/>
            <person name="McDonald S."/>
            <person name="McLean J."/>
            <person name="Mooney P."/>
            <person name="Moule S."/>
            <person name="Mungall K.L."/>
            <person name="Murphy L.D."/>
            <person name="Niblett D."/>
            <person name="Odell C."/>
            <person name="Oliver K."/>
            <person name="O'Neil S."/>
            <person name="Pearson D."/>
            <person name="Quail M.A."/>
            <person name="Rabbinowitsch E."/>
            <person name="Rutherford K.M."/>
            <person name="Rutter S."/>
            <person name="Saunders D."/>
            <person name="Seeger K."/>
            <person name="Sharp S."/>
            <person name="Skelton J."/>
            <person name="Simmonds M.N."/>
            <person name="Squares R."/>
            <person name="Squares S."/>
            <person name="Stevens K."/>
            <person name="Taylor K."/>
            <person name="Taylor R.G."/>
            <person name="Tivey A."/>
            <person name="Walsh S.V."/>
            <person name="Warren T."/>
            <person name="Whitehead S."/>
            <person name="Woodward J.R."/>
            <person name="Volckaert G."/>
            <person name="Aert R."/>
            <person name="Robben J."/>
            <person name="Grymonprez B."/>
            <person name="Weltjens I."/>
            <person name="Vanstreels E."/>
            <person name="Rieger M."/>
            <person name="Schaefer M."/>
            <person name="Mueller-Auer S."/>
            <person name="Gabel C."/>
            <person name="Fuchs M."/>
            <person name="Duesterhoeft A."/>
            <person name="Fritzc C."/>
            <person name="Holzer E."/>
            <person name="Moestl D."/>
            <person name="Hilbert H."/>
            <person name="Borzym K."/>
            <person name="Langer I."/>
            <person name="Beck A."/>
            <person name="Lehrach H."/>
            <person name="Reinhardt R."/>
            <person name="Pohl T.M."/>
            <person name="Eger P."/>
            <person name="Zimmermann W."/>
            <person name="Wedler H."/>
            <person name="Wambutt R."/>
            <person name="Purnelle B."/>
            <person name="Goffeau A."/>
            <person name="Cadieu E."/>
            <person name="Dreano S."/>
            <person name="Gloux S."/>
            <person name="Lelaure V."/>
            <person name="Mottier S."/>
            <person name="Galibert F."/>
            <person name="Aves S.J."/>
            <person name="Xiang Z."/>
            <person name="Hunt C."/>
            <person name="Moore K."/>
            <person name="Hurst S.M."/>
            <person name="Lucas M."/>
            <person name="Rochet M."/>
            <person name="Gaillardin C."/>
            <person name="Tallada V.A."/>
            <person name="Garzon A."/>
            <person name="Thode G."/>
            <person name="Daga R.R."/>
            <person name="Cruzado L."/>
            <person name="Jimenez J."/>
            <person name="Sanchez M."/>
            <person name="del Rey F."/>
            <person name="Benito J."/>
            <person name="Dominguez A."/>
            <person name="Revuelta J.L."/>
            <person name="Moreno S."/>
            <person name="Armstrong J."/>
            <person name="Forsburg S.L."/>
            <person name="Cerutti L."/>
            <person name="Lowe T."/>
            <person name="McCombie W.R."/>
            <person name="Paulsen I."/>
            <person name="Potashkin J."/>
            <person name="Shpakovski G.V."/>
            <person name="Ussery D."/>
            <person name="Barrell B.G."/>
            <person name="Nurse P."/>
        </authorList>
    </citation>
    <scope>NUCLEOTIDE SEQUENCE [LARGE SCALE GENOMIC DNA]</scope>
    <source>
        <strain>972 / ATCC 24843</strain>
    </source>
</reference>
<protein>
    <recommendedName>
        <fullName>AB hydrolase superfamily protein B1A11.02</fullName>
        <ecNumber>3.-.-.-</ecNumber>
    </recommendedName>
</protein>
<dbReference type="EC" id="3.-.-.-"/>
<dbReference type="EMBL" id="CU329670">
    <property type="protein sequence ID" value="CAC19727.1"/>
    <property type="molecule type" value="Genomic_DNA"/>
</dbReference>
<dbReference type="RefSeq" id="NP_593998.1">
    <property type="nucleotide sequence ID" value="NM_001019424.2"/>
</dbReference>
<dbReference type="SMR" id="Q9HDX3"/>
<dbReference type="BioGRID" id="279811">
    <property type="interactions" value="6"/>
</dbReference>
<dbReference type="FunCoup" id="Q9HDX3">
    <property type="interactions" value="140"/>
</dbReference>
<dbReference type="STRING" id="284812.Q9HDX3"/>
<dbReference type="ESTHER" id="schpo-SPAPB1A11.02">
    <property type="family name" value="Hormone-sensitive_lipase_like"/>
</dbReference>
<dbReference type="MEROPS" id="S09.B01"/>
<dbReference type="PaxDb" id="4896-SPAPB1A11.02.1"/>
<dbReference type="EnsemblFungi" id="SPAPB1A11.02.1">
    <property type="protein sequence ID" value="SPAPB1A11.02.1:pep"/>
    <property type="gene ID" value="SPAPB1A11.02"/>
</dbReference>
<dbReference type="KEGG" id="spo:2543389"/>
<dbReference type="PomBase" id="SPAPB1A11.02"/>
<dbReference type="VEuPathDB" id="FungiDB:SPAPB1A11.02"/>
<dbReference type="eggNOG" id="KOG1515">
    <property type="taxonomic scope" value="Eukaryota"/>
</dbReference>
<dbReference type="HOGENOM" id="CLU_012494_6_3_1"/>
<dbReference type="InParanoid" id="Q9HDX3"/>
<dbReference type="OMA" id="SEQEIHI"/>
<dbReference type="PhylomeDB" id="Q9HDX3"/>
<dbReference type="Reactome" id="R-SPO-211945">
    <property type="pathway name" value="Phase I - Functionalization of compounds"/>
</dbReference>
<dbReference type="Reactome" id="R-SPO-8964038">
    <property type="pathway name" value="LDL clearance"/>
</dbReference>
<dbReference type="PRO" id="PR:Q9HDX3"/>
<dbReference type="Proteomes" id="UP000002485">
    <property type="component" value="Chromosome I"/>
</dbReference>
<dbReference type="GO" id="GO:0016787">
    <property type="term" value="F:hydrolase activity"/>
    <property type="evidence" value="ECO:0007669"/>
    <property type="project" value="UniProtKB-KW"/>
</dbReference>
<dbReference type="GO" id="GO:0016042">
    <property type="term" value="P:lipid catabolic process"/>
    <property type="evidence" value="ECO:0000266"/>
    <property type="project" value="PomBase"/>
</dbReference>
<dbReference type="Gene3D" id="3.40.50.1820">
    <property type="entry name" value="alpha/beta hydrolase"/>
    <property type="match status" value="1"/>
</dbReference>
<dbReference type="InterPro" id="IPR013094">
    <property type="entry name" value="AB_hydrolase_3"/>
</dbReference>
<dbReference type="InterPro" id="IPR029058">
    <property type="entry name" value="AB_hydrolase_fold"/>
</dbReference>
<dbReference type="InterPro" id="IPR050300">
    <property type="entry name" value="GDXG_lipolytic_enzyme"/>
</dbReference>
<dbReference type="PANTHER" id="PTHR48081">
    <property type="entry name" value="AB HYDROLASE SUPERFAMILY PROTEIN C4A8.06C"/>
    <property type="match status" value="1"/>
</dbReference>
<dbReference type="PANTHER" id="PTHR48081:SF8">
    <property type="entry name" value="ALPHA_BETA HYDROLASE FOLD-3 DOMAIN-CONTAINING PROTEIN-RELATED"/>
    <property type="match status" value="1"/>
</dbReference>
<dbReference type="Pfam" id="PF07859">
    <property type="entry name" value="Abhydrolase_3"/>
    <property type="match status" value="1"/>
</dbReference>
<dbReference type="SUPFAM" id="SSF53474">
    <property type="entry name" value="alpha/beta-Hydrolases"/>
    <property type="match status" value="1"/>
</dbReference>
<evidence type="ECO:0000305" key="1"/>
<gene>
    <name type="ORF">SPAPB1A11.02</name>
</gene>
<comment type="similarity">
    <text evidence="1">Belongs to the AB hydrolase superfamily.</text>
</comment>
<accession>Q9HDX3</accession>
<organism>
    <name type="scientific">Schizosaccharomyces pombe (strain 972 / ATCC 24843)</name>
    <name type="common">Fission yeast</name>
    <dbReference type="NCBI Taxonomy" id="284812"/>
    <lineage>
        <taxon>Eukaryota</taxon>
        <taxon>Fungi</taxon>
        <taxon>Dikarya</taxon>
        <taxon>Ascomycota</taxon>
        <taxon>Taphrinomycotina</taxon>
        <taxon>Schizosaccharomycetes</taxon>
        <taxon>Schizosaccharomycetales</taxon>
        <taxon>Schizosaccharomycetaceae</taxon>
        <taxon>Schizosaccharomyces</taxon>
    </lineage>
</organism>
<feature type="chain" id="PRO_0000363394" description="AB hydrolase superfamily protein B1A11.02">
    <location>
        <begin position="1"/>
        <end position="339"/>
    </location>
</feature>
<keyword id="KW-0378">Hydrolase</keyword>
<keyword id="KW-1185">Reference proteome</keyword>
<sequence length="339" mass="38574">MAELEFTDEKFTKVDPELKEILKKHPAGTENITNIWQMRAMDEECRKQLAETILPLPDDVSVTDILIPTRDGTEIDGRVFTPVSVPADYRSLMVFYHSSGWCMRGVRDDDSLFKILTPKFGCVCVSVDYRLAPESKFPVAHNDAIDSFKWVASNIEKLGANPKRGFFLGGASAGGNFVSVLSHIARDEKIKPELTGLWHMVPTLIHPADLDEETMAQFRSYKETIHAPVITPKIMDIFFENYQPTPKSPLVNPLYYPTGHKDLPPSFFQCCGWDPLRDEGIAYEKALKAAGNETRLIVYEGVPHCFWVYYPMLSLRKKYFEDAIDGFTWLLSHVKKEDD</sequence>
<name>YKN2_SCHPO</name>